<keyword id="KW-0010">Activator</keyword>
<keyword id="KW-0963">Cytoplasm</keyword>
<keyword id="KW-0238">DNA-binding</keyword>
<keyword id="KW-0464">Manganese</keyword>
<keyword id="KW-0479">Metal-binding</keyword>
<keyword id="KW-1185">Reference proteome</keyword>
<keyword id="KW-0678">Repressor</keyword>
<keyword id="KW-0804">Transcription</keyword>
<keyword id="KW-0805">Transcription regulation</keyword>
<protein>
    <recommendedName>
        <fullName evidence="1">HTH-type transcriptional regulator MntR</fullName>
    </recommendedName>
    <alternativeName>
        <fullName evidence="1">Manganese transport regulator</fullName>
    </alternativeName>
</protein>
<proteinExistence type="inferred from homology"/>
<evidence type="ECO:0000255" key="1">
    <source>
        <dbReference type="HAMAP-Rule" id="MF_00732"/>
    </source>
</evidence>
<name>MNTR_BACCR</name>
<gene>
    <name evidence="1" type="primary">mntR</name>
    <name type="ordered locus">BC_4204</name>
</gene>
<comment type="function">
    <text evidence="1">Central regulator of manganese homeostasis.</text>
</comment>
<comment type="activity regulation">
    <text evidence="1">DNA binding is strongly activated by Mn(2+).</text>
</comment>
<comment type="subunit">
    <text evidence="1">Homodimer.</text>
</comment>
<comment type="subcellular location">
    <subcellularLocation>
        <location evidence="1">Cytoplasm</location>
    </subcellularLocation>
</comment>
<comment type="similarity">
    <text evidence="1">Belongs to the DtxR/MntR family.</text>
</comment>
<accession>Q818P5</accession>
<organism>
    <name type="scientific">Bacillus cereus (strain ATCC 14579 / DSM 31 / CCUG 7414 / JCM 2152 / NBRC 15305 / NCIMB 9373 / NCTC 2599 / NRRL B-3711)</name>
    <dbReference type="NCBI Taxonomy" id="226900"/>
    <lineage>
        <taxon>Bacteria</taxon>
        <taxon>Bacillati</taxon>
        <taxon>Bacillota</taxon>
        <taxon>Bacilli</taxon>
        <taxon>Bacillales</taxon>
        <taxon>Bacillaceae</taxon>
        <taxon>Bacillus</taxon>
        <taxon>Bacillus cereus group</taxon>
    </lineage>
</organism>
<reference key="1">
    <citation type="journal article" date="2003" name="Nature">
        <title>Genome sequence of Bacillus cereus and comparative analysis with Bacillus anthracis.</title>
        <authorList>
            <person name="Ivanova N."/>
            <person name="Sorokin A."/>
            <person name="Anderson I."/>
            <person name="Galleron N."/>
            <person name="Candelon B."/>
            <person name="Kapatral V."/>
            <person name="Bhattacharyya A."/>
            <person name="Reznik G."/>
            <person name="Mikhailova N."/>
            <person name="Lapidus A."/>
            <person name="Chu L."/>
            <person name="Mazur M."/>
            <person name="Goltsman E."/>
            <person name="Larsen N."/>
            <person name="D'Souza M."/>
            <person name="Walunas T."/>
            <person name="Grechkin Y."/>
            <person name="Pusch G."/>
            <person name="Haselkorn R."/>
            <person name="Fonstein M."/>
            <person name="Ehrlich S.D."/>
            <person name="Overbeek R."/>
            <person name="Kyrpides N.C."/>
        </authorList>
    </citation>
    <scope>NUCLEOTIDE SEQUENCE [LARGE SCALE GENOMIC DNA]</scope>
    <source>
        <strain>ATCC 14579 / DSM 31 / CCUG 7414 / JCM 2152 / NBRC 15305 / NCIMB 9373 / NCTC 2599 / NRRL B-3711</strain>
    </source>
</reference>
<sequence>MPTPSMEDYIEQIYLLIDEKGYARVSDIAEALSVHPSSVTKMVQKLDKDEYLIYEKYRGLVLTTKGKKIGERLVYRHDLLEQFMRIIGVDESKIYNDVEGIEHHLSWEAIDRIGDLVQYFEQDTVRVETLRGVQRANEEKSN</sequence>
<dbReference type="EMBL" id="AE016877">
    <property type="protein sequence ID" value="AAP11119.1"/>
    <property type="molecule type" value="Genomic_DNA"/>
</dbReference>
<dbReference type="RefSeq" id="NP_833918.1">
    <property type="nucleotide sequence ID" value="NC_004722.1"/>
</dbReference>
<dbReference type="RefSeq" id="WP_001143085.1">
    <property type="nucleotide sequence ID" value="NZ_CP138336.1"/>
</dbReference>
<dbReference type="SMR" id="Q818P5"/>
<dbReference type="STRING" id="226900.BC_4204"/>
<dbReference type="KEGG" id="bce:BC4204"/>
<dbReference type="PATRIC" id="fig|226900.8.peg.4343"/>
<dbReference type="HOGENOM" id="CLU_069532_3_0_9"/>
<dbReference type="OrthoDB" id="9791355at2"/>
<dbReference type="Proteomes" id="UP000001417">
    <property type="component" value="Chromosome"/>
</dbReference>
<dbReference type="GO" id="GO:0005737">
    <property type="term" value="C:cytoplasm"/>
    <property type="evidence" value="ECO:0007669"/>
    <property type="project" value="UniProtKB-SubCell"/>
</dbReference>
<dbReference type="GO" id="GO:0003677">
    <property type="term" value="F:DNA binding"/>
    <property type="evidence" value="ECO:0007669"/>
    <property type="project" value="UniProtKB-KW"/>
</dbReference>
<dbReference type="GO" id="GO:0003700">
    <property type="term" value="F:DNA-binding transcription factor activity"/>
    <property type="evidence" value="ECO:0007669"/>
    <property type="project" value="UniProtKB-UniRule"/>
</dbReference>
<dbReference type="GO" id="GO:0030145">
    <property type="term" value="F:manganese ion binding"/>
    <property type="evidence" value="ECO:0007669"/>
    <property type="project" value="UniProtKB-UniRule"/>
</dbReference>
<dbReference type="GO" id="GO:0046983">
    <property type="term" value="F:protein dimerization activity"/>
    <property type="evidence" value="ECO:0007669"/>
    <property type="project" value="InterPro"/>
</dbReference>
<dbReference type="GO" id="GO:0030026">
    <property type="term" value="P:intracellular manganese ion homeostasis"/>
    <property type="evidence" value="ECO:0007669"/>
    <property type="project" value="UniProtKB-UniRule"/>
</dbReference>
<dbReference type="FunFam" id="1.10.10.10:FF:000189">
    <property type="entry name" value="HTH-type transcriptional regulator MntR"/>
    <property type="match status" value="1"/>
</dbReference>
<dbReference type="FunFam" id="1.10.60.10:FF:000003">
    <property type="entry name" value="HTH-type transcriptional regulator MntR"/>
    <property type="match status" value="1"/>
</dbReference>
<dbReference type="Gene3D" id="1.10.60.10">
    <property type="entry name" value="Iron dependent repressor, metal binding and dimerisation domain"/>
    <property type="match status" value="1"/>
</dbReference>
<dbReference type="Gene3D" id="1.10.10.10">
    <property type="entry name" value="Winged helix-like DNA-binding domain superfamily/Winged helix DNA-binding domain"/>
    <property type="match status" value="1"/>
</dbReference>
<dbReference type="HAMAP" id="MF_00732">
    <property type="entry name" value="HTH_MntR"/>
    <property type="match status" value="1"/>
</dbReference>
<dbReference type="InterPro" id="IPR050536">
    <property type="entry name" value="DtxR_MntR_Metal-Reg"/>
</dbReference>
<dbReference type="InterPro" id="IPR001367">
    <property type="entry name" value="Fe_dep_repressor"/>
</dbReference>
<dbReference type="InterPro" id="IPR036421">
    <property type="entry name" value="Fe_dep_repressor_sf"/>
</dbReference>
<dbReference type="InterPro" id="IPR022687">
    <property type="entry name" value="HTH_DTXR"/>
</dbReference>
<dbReference type="InterPro" id="IPR022897">
    <property type="entry name" value="HTH_tscrpt_reg_MntR"/>
</dbReference>
<dbReference type="InterPro" id="IPR022689">
    <property type="entry name" value="Iron_dep_repressor"/>
</dbReference>
<dbReference type="InterPro" id="IPR036388">
    <property type="entry name" value="WH-like_DNA-bd_sf"/>
</dbReference>
<dbReference type="InterPro" id="IPR036390">
    <property type="entry name" value="WH_DNA-bd_sf"/>
</dbReference>
<dbReference type="NCBIfam" id="NF003025">
    <property type="entry name" value="PRK03902.1"/>
    <property type="match status" value="1"/>
</dbReference>
<dbReference type="PANTHER" id="PTHR33238">
    <property type="entry name" value="IRON (METAL) DEPENDENT REPRESSOR, DTXR FAMILY"/>
    <property type="match status" value="1"/>
</dbReference>
<dbReference type="PANTHER" id="PTHR33238:SF11">
    <property type="entry name" value="TRANSCRIPTIONAL REGULATOR MNTR"/>
    <property type="match status" value="1"/>
</dbReference>
<dbReference type="Pfam" id="PF02742">
    <property type="entry name" value="Fe_dep_repr_C"/>
    <property type="match status" value="1"/>
</dbReference>
<dbReference type="Pfam" id="PF01325">
    <property type="entry name" value="Fe_dep_repress"/>
    <property type="match status" value="1"/>
</dbReference>
<dbReference type="SMART" id="SM00529">
    <property type="entry name" value="HTH_DTXR"/>
    <property type="match status" value="1"/>
</dbReference>
<dbReference type="SUPFAM" id="SSF47979">
    <property type="entry name" value="Iron-dependent repressor protein, dimerization domain"/>
    <property type="match status" value="1"/>
</dbReference>
<dbReference type="SUPFAM" id="SSF46785">
    <property type="entry name" value="Winged helix' DNA-binding domain"/>
    <property type="match status" value="1"/>
</dbReference>
<dbReference type="PROSITE" id="PS50944">
    <property type="entry name" value="HTH_DTXR"/>
    <property type="match status" value="1"/>
</dbReference>
<feature type="chain" id="PRO_0000201116" description="HTH-type transcriptional regulator MntR">
    <location>
        <begin position="1"/>
        <end position="142"/>
    </location>
</feature>
<feature type="domain" description="HTH dtxR-type" evidence="1">
    <location>
        <begin position="1"/>
        <end position="63"/>
    </location>
</feature>
<feature type="binding site" evidence="1">
    <location>
        <position position="8"/>
    </location>
    <ligand>
        <name>Mn(2+)</name>
        <dbReference type="ChEBI" id="CHEBI:29035"/>
        <label>1</label>
    </ligand>
</feature>
<feature type="binding site" evidence="1">
    <location>
        <position position="11"/>
    </location>
    <ligand>
        <name>Mn(2+)</name>
        <dbReference type="ChEBI" id="CHEBI:29035"/>
        <label>2</label>
    </ligand>
</feature>
<feature type="binding site" evidence="1">
    <location>
        <position position="77"/>
    </location>
    <ligand>
        <name>Mn(2+)</name>
        <dbReference type="ChEBI" id="CHEBI:29035"/>
        <label>2</label>
    </ligand>
</feature>
<feature type="binding site" evidence="1">
    <location>
        <position position="99"/>
    </location>
    <ligand>
        <name>Mn(2+)</name>
        <dbReference type="ChEBI" id="CHEBI:29035"/>
        <label>1</label>
    </ligand>
</feature>
<feature type="binding site" evidence="1">
    <location>
        <position position="99"/>
    </location>
    <ligand>
        <name>Mn(2+)</name>
        <dbReference type="ChEBI" id="CHEBI:29035"/>
        <label>2</label>
    </ligand>
</feature>
<feature type="binding site" evidence="1">
    <location>
        <position position="102"/>
    </location>
    <ligand>
        <name>Mn(2+)</name>
        <dbReference type="ChEBI" id="CHEBI:29035"/>
        <label>1</label>
    </ligand>
</feature>
<feature type="binding site" evidence="1">
    <location>
        <position position="102"/>
    </location>
    <ligand>
        <name>Mn(2+)</name>
        <dbReference type="ChEBI" id="CHEBI:29035"/>
        <label>2</label>
    </ligand>
</feature>
<feature type="binding site" evidence="1">
    <location>
        <position position="103"/>
    </location>
    <ligand>
        <name>Mn(2+)</name>
        <dbReference type="ChEBI" id="CHEBI:29035"/>
        <label>1</label>
    </ligand>
</feature>